<keyword id="KW-0007">Acetylation</keyword>
<keyword id="KW-0148">Chlorophyll</keyword>
<keyword id="KW-0150">Chloroplast</keyword>
<keyword id="KW-0157">Chromophore</keyword>
<keyword id="KW-0460">Magnesium</keyword>
<keyword id="KW-0472">Membrane</keyword>
<keyword id="KW-0479">Metal-binding</keyword>
<keyword id="KW-0597">Phosphoprotein</keyword>
<keyword id="KW-0602">Photosynthesis</keyword>
<keyword id="KW-0603">Photosystem I</keyword>
<keyword id="KW-0604">Photosystem II</keyword>
<keyword id="KW-0934">Plastid</keyword>
<keyword id="KW-1185">Reference proteome</keyword>
<keyword id="KW-0793">Thylakoid</keyword>
<keyword id="KW-0809">Transit peptide</keyword>
<keyword id="KW-0812">Transmembrane</keyword>
<keyword id="KW-1133">Transmembrane helix</keyword>
<protein>
    <recommendedName>
        <fullName>Chlorophyll a-b binding protein 48, chloroplastic</fullName>
    </recommendedName>
    <alternativeName>
        <fullName>LHCII type I CAB-48</fullName>
        <shortName>LHCP</shortName>
    </alternativeName>
</protein>
<reference key="1">
    <citation type="journal article" date="1992" name="Plant Mol. Biol.">
        <title>Isolation of a gene from maize encoding a chlorophyll a/b-binding protein.</title>
        <authorList>
            <person name="Knight M.E."/>
            <person name="Ray J.A."/>
            <person name="Schuch W."/>
        </authorList>
    </citation>
    <scope>NUCLEOTIDE SEQUENCE [GENOMIC DNA]</scope>
    <source>
        <strain>cv. BE10</strain>
    </source>
</reference>
<name>CB48_MAIZE</name>
<dbReference type="EMBL" id="X63205">
    <property type="protein sequence ID" value="CAA44888.1"/>
    <property type="molecule type" value="Genomic_DNA"/>
</dbReference>
<dbReference type="PIR" id="S22497">
    <property type="entry name" value="S22497"/>
</dbReference>
<dbReference type="SMR" id="Q00827"/>
<dbReference type="STRING" id="4577.Q00827"/>
<dbReference type="PaxDb" id="4577-GRMZM2G120619_P01"/>
<dbReference type="MaizeGDB" id="61648"/>
<dbReference type="eggNOG" id="ENOG502QPU1">
    <property type="taxonomic scope" value="Eukaryota"/>
</dbReference>
<dbReference type="InParanoid" id="Q00827"/>
<dbReference type="Proteomes" id="UP000007305">
    <property type="component" value="Unplaced"/>
</dbReference>
<dbReference type="ExpressionAtlas" id="Q00827">
    <property type="expression patterns" value="differential"/>
</dbReference>
<dbReference type="GO" id="GO:0009535">
    <property type="term" value="C:chloroplast thylakoid membrane"/>
    <property type="evidence" value="ECO:0000318"/>
    <property type="project" value="GO_Central"/>
</dbReference>
<dbReference type="GO" id="GO:0009522">
    <property type="term" value="C:photosystem I"/>
    <property type="evidence" value="ECO:0007669"/>
    <property type="project" value="UniProtKB-KW"/>
</dbReference>
<dbReference type="GO" id="GO:0009523">
    <property type="term" value="C:photosystem II"/>
    <property type="evidence" value="ECO:0007669"/>
    <property type="project" value="UniProtKB-KW"/>
</dbReference>
<dbReference type="GO" id="GO:0016168">
    <property type="term" value="F:chlorophyll binding"/>
    <property type="evidence" value="ECO:0007669"/>
    <property type="project" value="UniProtKB-KW"/>
</dbReference>
<dbReference type="GO" id="GO:0046872">
    <property type="term" value="F:metal ion binding"/>
    <property type="evidence" value="ECO:0007669"/>
    <property type="project" value="UniProtKB-KW"/>
</dbReference>
<dbReference type="GO" id="GO:0009768">
    <property type="term" value="P:photosynthesis, light harvesting in photosystem I"/>
    <property type="evidence" value="ECO:0000318"/>
    <property type="project" value="GO_Central"/>
</dbReference>
<dbReference type="GO" id="GO:0009416">
    <property type="term" value="P:response to light stimulus"/>
    <property type="evidence" value="ECO:0000318"/>
    <property type="project" value="GO_Central"/>
</dbReference>
<dbReference type="FunFam" id="1.10.3460.10:FF:000001">
    <property type="entry name" value="Chlorophyll a-b binding protein, chloroplastic"/>
    <property type="match status" value="1"/>
</dbReference>
<dbReference type="Gene3D" id="1.10.3460.10">
    <property type="entry name" value="Chlorophyll a/b binding protein domain"/>
    <property type="match status" value="1"/>
</dbReference>
<dbReference type="InterPro" id="IPR001344">
    <property type="entry name" value="Chloro_AB-bd_pln"/>
</dbReference>
<dbReference type="InterPro" id="IPR022796">
    <property type="entry name" value="Chloroa_b-bind"/>
</dbReference>
<dbReference type="PANTHER" id="PTHR21649">
    <property type="entry name" value="CHLOROPHYLL A/B BINDING PROTEIN"/>
    <property type="match status" value="1"/>
</dbReference>
<dbReference type="Pfam" id="PF00504">
    <property type="entry name" value="Chloroa_b-bind"/>
    <property type="match status" value="1"/>
</dbReference>
<dbReference type="SUPFAM" id="SSF103511">
    <property type="entry name" value="Chlorophyll a-b binding protein"/>
    <property type="match status" value="1"/>
</dbReference>
<feature type="transit peptide" description="Chloroplast" evidence="5">
    <location>
        <begin position="1"/>
        <end position="32"/>
    </location>
</feature>
<feature type="chain" id="PRO_0000003673" description="Chlorophyll a-b binding protein 48, chloroplastic">
    <location>
        <begin position="33"/>
        <end position="264"/>
    </location>
</feature>
<feature type="transmembrane region" description="Helical" evidence="4">
    <location>
        <begin position="98"/>
        <end position="118"/>
    </location>
</feature>
<feature type="transmembrane region" description="Helical" evidence="4">
    <location>
        <begin position="150"/>
        <end position="170"/>
    </location>
</feature>
<feature type="transmembrane region" description="Helical" evidence="4">
    <location>
        <begin position="218"/>
        <end position="238"/>
    </location>
</feature>
<feature type="binding site" description="axial binding residue" evidence="3">
    <location>
        <position position="56"/>
    </location>
    <ligand>
        <name>chlorophyll b</name>
        <dbReference type="ChEBI" id="CHEBI:61721"/>
        <label>1</label>
    </ligand>
    <ligandPart>
        <name>Mg</name>
        <dbReference type="ChEBI" id="CHEBI:25107"/>
    </ligandPart>
</feature>
<feature type="binding site" evidence="1">
    <location>
        <position position="78"/>
    </location>
    <ligand>
        <name>chlorophyll a</name>
        <dbReference type="ChEBI" id="CHEBI:58416"/>
        <label>1</label>
    </ligand>
</feature>
<feature type="binding site" evidence="1">
    <location>
        <position position="84"/>
    </location>
    <ligand>
        <name>chlorophyll a</name>
        <dbReference type="ChEBI" id="CHEBI:58416"/>
        <label>1</label>
    </ligand>
</feature>
<feature type="binding site" description="axial binding residue" evidence="3">
    <location>
        <position position="97"/>
    </location>
    <ligand>
        <name>chlorophyll a</name>
        <dbReference type="ChEBI" id="CHEBI:58416"/>
        <label>1</label>
    </ligand>
    <ligandPart>
        <name>Mg</name>
        <dbReference type="ChEBI" id="CHEBI:25107"/>
    </ligandPart>
</feature>
<feature type="binding site" description="axial binding residue" evidence="3">
    <location>
        <position position="100"/>
    </location>
    <ligand>
        <name>chlorophyll a</name>
        <dbReference type="ChEBI" id="CHEBI:58416"/>
        <label>2</label>
    </ligand>
    <ligandPart>
        <name>Mg</name>
        <dbReference type="ChEBI" id="CHEBI:25107"/>
    </ligandPart>
</feature>
<feature type="binding site" evidence="1">
    <location>
        <position position="102"/>
    </location>
    <ligand>
        <name>chlorophyll b</name>
        <dbReference type="ChEBI" id="CHEBI:61721"/>
        <label>2</label>
    </ligand>
</feature>
<feature type="binding site" evidence="1">
    <location>
        <position position="135"/>
    </location>
    <ligand>
        <name>chlorophyll a</name>
        <dbReference type="ChEBI" id="CHEBI:58416"/>
        <label>3</label>
    </ligand>
</feature>
<feature type="binding site" description="axial binding residue" evidence="3">
    <location>
        <position position="151"/>
    </location>
    <ligand>
        <name>chlorophyll b</name>
        <dbReference type="ChEBI" id="CHEBI:61721"/>
        <label>2</label>
    </ligand>
    <ligandPart>
        <name>Mg</name>
        <dbReference type="ChEBI" id="CHEBI:25107"/>
    </ligandPart>
</feature>
<feature type="binding site" evidence="1">
    <location>
        <position position="155"/>
    </location>
    <ligand>
        <name>chlorophyll b</name>
        <dbReference type="ChEBI" id="CHEBI:61721"/>
        <label>3</label>
    </ligand>
</feature>
<feature type="binding site" evidence="1">
    <location>
        <position position="163"/>
    </location>
    <ligand>
        <name>chlorophyll b</name>
        <dbReference type="ChEBI" id="CHEBI:61721"/>
        <label>4</label>
    </ligand>
</feature>
<feature type="binding site" evidence="2">
    <location>
        <position position="163"/>
    </location>
    <ligand>
        <name>chlorophyll b</name>
        <dbReference type="ChEBI" id="CHEBI:61721"/>
        <label>5</label>
    </ligand>
</feature>
<feature type="binding site" description="axial binding residue" evidence="3">
    <location>
        <position position="171"/>
    </location>
    <ligand>
        <name>chlorophyll b</name>
        <dbReference type="ChEBI" id="CHEBI:61721"/>
        <label>3</label>
    </ligand>
    <ligandPart>
        <name>Mg</name>
        <dbReference type="ChEBI" id="CHEBI:25107"/>
    </ligandPart>
</feature>
<feature type="binding site" evidence="1">
    <location>
        <position position="180"/>
    </location>
    <ligand>
        <name>chlorophyll b</name>
        <dbReference type="ChEBI" id="CHEBI:61721"/>
        <label>2</label>
    </ligand>
</feature>
<feature type="binding site" evidence="1">
    <location>
        <position position="211"/>
    </location>
    <ligand>
        <name>chlorophyll a</name>
        <dbReference type="ChEBI" id="CHEBI:58416"/>
        <label>5</label>
    </ligand>
</feature>
<feature type="binding site" description="axial binding residue" evidence="3">
    <location>
        <position position="212"/>
    </location>
    <ligand>
        <name>chlorophyll a</name>
        <dbReference type="ChEBI" id="CHEBI:58416"/>
        <label>3</label>
    </ligand>
    <ligandPart>
        <name>Mg</name>
        <dbReference type="ChEBI" id="CHEBI:25107"/>
    </ligandPart>
</feature>
<feature type="binding site" description="axial binding residue" evidence="3">
    <location>
        <position position="215"/>
    </location>
    <ligand>
        <name>chlorophyll a</name>
        <dbReference type="ChEBI" id="CHEBI:58416"/>
        <label>4</label>
    </ligand>
    <ligandPart>
        <name>Mg</name>
        <dbReference type="ChEBI" id="CHEBI:25107"/>
    </ligandPart>
</feature>
<feature type="binding site" evidence="1">
    <location>
        <position position="217"/>
    </location>
    <ligand>
        <name>chlorophyll a</name>
        <dbReference type="ChEBI" id="CHEBI:58416"/>
        <label>1</label>
    </ligand>
</feature>
<feature type="binding site" description="axial binding residue" evidence="3">
    <location>
        <position position="229"/>
    </location>
    <ligand>
        <name>chlorophyll a</name>
        <dbReference type="ChEBI" id="CHEBI:58416"/>
        <label>5</label>
    </ligand>
    <ligandPart>
        <name>Mg</name>
        <dbReference type="ChEBI" id="CHEBI:25107"/>
    </ligandPart>
</feature>
<feature type="binding site" description="axial binding residue" evidence="3">
    <location>
        <position position="244"/>
    </location>
    <ligand>
        <name>chlorophyll a</name>
        <dbReference type="ChEBI" id="CHEBI:58416"/>
        <label>6</label>
    </ligand>
    <ligandPart>
        <name>Mg</name>
        <dbReference type="ChEBI" id="CHEBI:25107"/>
    </ligandPart>
</feature>
<feature type="binding site" evidence="1">
    <location>
        <position position="253"/>
    </location>
    <ligand>
        <name>chlorophyll a</name>
        <dbReference type="ChEBI" id="CHEBI:58416"/>
        <label>6</label>
    </ligand>
</feature>
<feature type="binding site" evidence="1">
    <location>
        <position position="260"/>
    </location>
    <ligand>
        <name>chlorophyll b</name>
        <dbReference type="ChEBI" id="CHEBI:61721"/>
        <label>5</label>
    </ligand>
</feature>
<feature type="modified residue" description="N2-acetylarginine" evidence="1">
    <location>
        <position position="33"/>
    </location>
</feature>
<feature type="modified residue" description="Phosphothreonine" evidence="1">
    <location>
        <position position="35"/>
    </location>
</feature>
<gene>
    <name type="primary">CAB48</name>
</gene>
<comment type="function">
    <text>The light-harvesting complex (LHC) functions as a light receptor, it captures and delivers excitation energy to photosystems with which it is closely associated.</text>
</comment>
<comment type="cofactor">
    <text evidence="1">Binds at least 14 chlorophylls (8 Chl-a and 6 Chl-b) and carotenoids such as lutein and neoxanthin.</text>
</comment>
<comment type="subunit">
    <text>The LHC complex consists of chlorophyll a-b binding proteins.</text>
</comment>
<comment type="subcellular location">
    <subcellularLocation>
        <location>Plastid</location>
        <location>Chloroplast thylakoid membrane</location>
        <topology>Multi-pass membrane protein</topology>
    </subcellularLocation>
</comment>
<comment type="domain">
    <text>The N-terminus of the protein extends into the stroma where it is involved with adhesion of granal membranes and post-translational modifications; both are believed to mediate the distribution of excitation energy between photosystems I and II.</text>
</comment>
<comment type="PTM">
    <text evidence="1">Photoregulated by reversible phosphorylation of its threonine residues.</text>
</comment>
<comment type="similarity">
    <text evidence="5">Belongs to the light-harvesting chlorophyll a/b-binding (LHC) protein family.</text>
</comment>
<accession>Q00827</accession>
<proteinExistence type="inferred from homology"/>
<sequence>MAAATMAITSRALVGKPAAGTRDVFGEGRITMRKTAAKPKPARSGSPWYGADRVLYLGPLSGSPPSYLTGEFPGDYGWDTEGLSADPETFAKNRELEVIHCRWAIAVGLGCVFPELLARNGVKFGEGVWFKAGSQIFSEGGLSHPGNPSLVHAQSILAIWACQVVLMGAVEGYHVAGGRLGEVVDPLYLGGSFDPLGLGDDPERFAELKVKEIKNGRLAMFSMFGFFVQAIVTGKGPIENLADHLTDPVNNNAWAYATNFVPGK</sequence>
<organism>
    <name type="scientific">Zea mays</name>
    <name type="common">Maize</name>
    <dbReference type="NCBI Taxonomy" id="4577"/>
    <lineage>
        <taxon>Eukaryota</taxon>
        <taxon>Viridiplantae</taxon>
        <taxon>Streptophyta</taxon>
        <taxon>Embryophyta</taxon>
        <taxon>Tracheophyta</taxon>
        <taxon>Spermatophyta</taxon>
        <taxon>Magnoliopsida</taxon>
        <taxon>Liliopsida</taxon>
        <taxon>Poales</taxon>
        <taxon>Poaceae</taxon>
        <taxon>PACMAD clade</taxon>
        <taxon>Panicoideae</taxon>
        <taxon>Andropogonodae</taxon>
        <taxon>Andropogoneae</taxon>
        <taxon>Tripsacinae</taxon>
        <taxon>Zea</taxon>
    </lineage>
</organism>
<evidence type="ECO:0000250" key="1"/>
<evidence type="ECO:0000250" key="2">
    <source>
        <dbReference type="UniProtKB" id="P07371"/>
    </source>
</evidence>
<evidence type="ECO:0000250" key="3">
    <source>
        <dbReference type="UniProtKB" id="P12333"/>
    </source>
</evidence>
<evidence type="ECO:0000255" key="4"/>
<evidence type="ECO:0000305" key="5"/>